<feature type="chain" id="PRO_1000117711" description="Protein NrdI">
    <location>
        <begin position="1"/>
        <end position="136"/>
    </location>
</feature>
<reference key="1">
    <citation type="journal article" date="2008" name="J. Bacteriol.">
        <title>Insights into the environmental resistance gene pool from the genome sequence of the multidrug-resistant environmental isolate Escherichia coli SMS-3-5.</title>
        <authorList>
            <person name="Fricke W.F."/>
            <person name="Wright M.S."/>
            <person name="Lindell A.H."/>
            <person name="Harkins D.M."/>
            <person name="Baker-Austin C."/>
            <person name="Ravel J."/>
            <person name="Stepanauskas R."/>
        </authorList>
    </citation>
    <scope>NUCLEOTIDE SEQUENCE [LARGE SCALE GENOMIC DNA]</scope>
    <source>
        <strain>SMS-3-5 / SECEC</strain>
    </source>
</reference>
<organism>
    <name type="scientific">Escherichia coli (strain SMS-3-5 / SECEC)</name>
    <dbReference type="NCBI Taxonomy" id="439855"/>
    <lineage>
        <taxon>Bacteria</taxon>
        <taxon>Pseudomonadati</taxon>
        <taxon>Pseudomonadota</taxon>
        <taxon>Gammaproteobacteria</taxon>
        <taxon>Enterobacterales</taxon>
        <taxon>Enterobacteriaceae</taxon>
        <taxon>Escherichia</taxon>
    </lineage>
</organism>
<name>NRDI_ECOSM</name>
<sequence length="136" mass="15340">MSQLVYFSSSSENTQRFIERLGLPAVRIPLNERERIQVDEPYILIVPSYGGGGTAGAVPRQVIRFLNDEHNRALLRGVIASGNRNFGEAYGRAGDVIARKCGVPWLYRFELMGTQSDIENVRKGVTEFWQRQPQNA</sequence>
<proteinExistence type="inferred from homology"/>
<gene>
    <name evidence="1" type="primary">nrdI</name>
    <name type="ordered locus">EcSMS35_2796</name>
</gene>
<protein>
    <recommendedName>
        <fullName evidence="1">Protein NrdI</fullName>
    </recommendedName>
</protein>
<dbReference type="EMBL" id="CP000970">
    <property type="protein sequence ID" value="ACB19170.1"/>
    <property type="molecule type" value="Genomic_DNA"/>
</dbReference>
<dbReference type="RefSeq" id="WP_000080947.1">
    <property type="nucleotide sequence ID" value="NC_010498.1"/>
</dbReference>
<dbReference type="SMR" id="B1LPE9"/>
<dbReference type="GeneID" id="75172757"/>
<dbReference type="KEGG" id="ecm:EcSMS35_2796"/>
<dbReference type="HOGENOM" id="CLU_114845_0_0_6"/>
<dbReference type="Proteomes" id="UP000007011">
    <property type="component" value="Chromosome"/>
</dbReference>
<dbReference type="GO" id="GO:0010181">
    <property type="term" value="F:FMN binding"/>
    <property type="evidence" value="ECO:0007669"/>
    <property type="project" value="InterPro"/>
</dbReference>
<dbReference type="GO" id="GO:0036211">
    <property type="term" value="P:protein modification process"/>
    <property type="evidence" value="ECO:0007669"/>
    <property type="project" value="InterPro"/>
</dbReference>
<dbReference type="FunFam" id="3.40.50.360:FF:000005">
    <property type="entry name" value="Protein NrdI"/>
    <property type="match status" value="1"/>
</dbReference>
<dbReference type="Gene3D" id="3.40.50.360">
    <property type="match status" value="1"/>
</dbReference>
<dbReference type="HAMAP" id="MF_00128">
    <property type="entry name" value="NrdI"/>
    <property type="match status" value="1"/>
</dbReference>
<dbReference type="InterPro" id="IPR029039">
    <property type="entry name" value="Flavoprotein-like_sf"/>
</dbReference>
<dbReference type="InterPro" id="IPR020852">
    <property type="entry name" value="RNR_Ib_NrdI_bac"/>
</dbReference>
<dbReference type="InterPro" id="IPR004465">
    <property type="entry name" value="RNR_NrdI"/>
</dbReference>
<dbReference type="NCBIfam" id="TIGR00333">
    <property type="entry name" value="nrdI"/>
    <property type="match status" value="1"/>
</dbReference>
<dbReference type="PANTHER" id="PTHR37297">
    <property type="entry name" value="PROTEIN NRDI"/>
    <property type="match status" value="1"/>
</dbReference>
<dbReference type="PANTHER" id="PTHR37297:SF1">
    <property type="entry name" value="PROTEIN NRDI"/>
    <property type="match status" value="1"/>
</dbReference>
<dbReference type="Pfam" id="PF07972">
    <property type="entry name" value="Flavodoxin_NdrI"/>
    <property type="match status" value="1"/>
</dbReference>
<dbReference type="PIRSF" id="PIRSF005087">
    <property type="entry name" value="NrdI"/>
    <property type="match status" value="1"/>
</dbReference>
<dbReference type="SUPFAM" id="SSF52218">
    <property type="entry name" value="Flavoproteins"/>
    <property type="match status" value="1"/>
</dbReference>
<accession>B1LPE9</accession>
<evidence type="ECO:0000255" key="1">
    <source>
        <dbReference type="HAMAP-Rule" id="MF_00128"/>
    </source>
</evidence>
<comment type="function">
    <text evidence="1">Probably involved in ribonucleotide reductase function.</text>
</comment>
<comment type="similarity">
    <text evidence="1">Belongs to the NrdI family.</text>
</comment>